<accession>Q5HZK9</accession>
<evidence type="ECO:0000250" key="1">
    <source>
        <dbReference type="UniProtKB" id="B9V5F5"/>
    </source>
</evidence>
<evidence type="ECO:0000250" key="2">
    <source>
        <dbReference type="UniProtKB" id="P0CB05"/>
    </source>
</evidence>
<evidence type="ECO:0000250" key="3">
    <source>
        <dbReference type="UniProtKB" id="Q96MT8"/>
    </source>
</evidence>
<evidence type="ECO:0000255" key="4"/>
<evidence type="ECO:0000305" key="5"/>
<reference key="1">
    <citation type="submission" date="2005-01" db="EMBL/GenBank/DDBJ databases">
        <authorList>
            <consortium name="NIH - Xenopus Gene Collection (XGC) project"/>
        </authorList>
    </citation>
    <scope>NUCLEOTIDE SEQUENCE [LARGE SCALE MRNA]</scope>
    <source>
        <tissue>Egg</tissue>
    </source>
</reference>
<keyword id="KW-0131">Cell cycle</keyword>
<keyword id="KW-0132">Cell division</keyword>
<keyword id="KW-0175">Coiled coil</keyword>
<keyword id="KW-0963">Cytoplasm</keyword>
<keyword id="KW-0206">Cytoskeleton</keyword>
<keyword id="KW-0227">DNA damage</keyword>
<keyword id="KW-0498">Mitosis</keyword>
<keyword id="KW-0597">Phosphoprotein</keyword>
<keyword id="KW-1185">Reference proteome</keyword>
<feature type="chain" id="PRO_0000381810" description="Centrosomal protein of 63 kDa-B">
    <location>
        <begin position="1"/>
        <end position="648"/>
    </location>
</feature>
<feature type="coiled-coil region" evidence="4">
    <location>
        <begin position="19"/>
        <end position="188"/>
    </location>
</feature>
<feature type="coiled-coil region" evidence="4">
    <location>
        <begin position="222"/>
        <end position="555"/>
    </location>
</feature>
<feature type="coiled-coil region" evidence="4">
    <location>
        <begin position="611"/>
        <end position="644"/>
    </location>
</feature>
<feature type="modified residue" description="Phosphoserine; by atm and atr" evidence="1">
    <location>
        <position position="559"/>
    </location>
</feature>
<gene>
    <name type="primary">cep63-b</name>
</gene>
<protein>
    <recommendedName>
        <fullName>Centrosomal protein of 63 kDa-B</fullName>
        <shortName>Cep63-B</shortName>
    </recommendedName>
</protein>
<sequence>MEALLQGLQRQDRMGALQDSCEAELQELMKQIDIMLDHKRSQWEAETETMKTRLELKEQELNCALDSEERLNQEVRRLRQQLIQQEEETQNKTTQYEAQLSGFKEELNRLKKSYEKVQKKHLRSEMKAKAEEERSEVSRLTRRLEEFRQRSLDWEKQRLLYQQQLSGLEAQRKTLIEQTEMYQQQSHNRKQMLEQTNLVGRSELQNLSGQLHRANDSLCAKEEELETLKIQLRCAVEGQKRAEHETELSKQAVQALKEKAELRATLQAHTEFLQGSRVQKHELLPEGYRGSEVLRENNSIRSLEERLQETGQVGGETEVEAIRSKLSVSRMNEQRLQAEVTCLEDSVESVTSQCQLLAKELKGKEEYLHGVKEDHQKCLSENKKLKGQLSQAELTHKSVLDGMRKEISQLTQELHQRDIRMASSAGIDWERKIKAERQRAEREAAEHRMSLNALENLRQENCRLSELLQTQEPDVAQALVNLEQANQRLQRELLQTQEKLELIAQRRESEIQNAVDSISQELLNKQEQELRIMQERLKVYEQEMQTFRSQQDAASSGSSLESIFSEVWKEQATGSPISAASVDSAIEPVEDLASSLPVPPTSPANAVASRFLQEEEQRSHELLQRLNAHIEELKQESQRTVEHFTQAR</sequence>
<name>CE63B_XENLA</name>
<organism>
    <name type="scientific">Xenopus laevis</name>
    <name type="common">African clawed frog</name>
    <dbReference type="NCBI Taxonomy" id="8355"/>
    <lineage>
        <taxon>Eukaryota</taxon>
        <taxon>Metazoa</taxon>
        <taxon>Chordata</taxon>
        <taxon>Craniata</taxon>
        <taxon>Vertebrata</taxon>
        <taxon>Euteleostomi</taxon>
        <taxon>Amphibia</taxon>
        <taxon>Batrachia</taxon>
        <taxon>Anura</taxon>
        <taxon>Pipoidea</taxon>
        <taxon>Pipidae</taxon>
        <taxon>Xenopodinae</taxon>
        <taxon>Xenopus</taxon>
        <taxon>Xenopus</taxon>
    </lineage>
</organism>
<proteinExistence type="evidence at transcript level"/>
<comment type="function">
    <text evidence="2">Required for normal spindle assembly. Plays a key role in mother-centriole-dependent centriole duplication. Plays a role in DNA damage response. Following DNA damage, such as double-strand breaks (DSBs), is removed from centrosomes; this leads to the inactivation of spindle assembly and delay in mitotic progression.</text>
</comment>
<comment type="subcellular location">
    <subcellularLocation>
        <location evidence="3">Cytoplasm</location>
        <location evidence="3">Cytoskeleton</location>
        <location evidence="3">Microtubule organizing center</location>
        <location evidence="3">Centrosome</location>
        <location evidence="3">Centriole</location>
    </subcellularLocation>
    <subcellularLocation>
        <location evidence="2">Cytoplasm</location>
        <location evidence="2">Cytoskeleton</location>
        <location evidence="2">Microtubule organizing center</location>
        <location evidence="2">Centrosome</location>
    </subcellularLocation>
</comment>
<comment type="PTM">
    <text evidence="1">Phosphorylation at Ser-559 by atm and atr promotes its delocalization from the centrosome and impairs its ability to promote centrosome dependent spindle assembly.</text>
</comment>
<comment type="similarity">
    <text evidence="5">Belongs to the CEP63 family.</text>
</comment>
<comment type="sequence caution" evidence="5">
    <conflict type="frameshift">
        <sequence resource="EMBL-CDS" id="AAH88974"/>
    </conflict>
</comment>
<dbReference type="EMBL" id="BC088974">
    <property type="protein sequence ID" value="AAH88974.1"/>
    <property type="status" value="ALT_FRAME"/>
    <property type="molecule type" value="mRNA"/>
</dbReference>
<dbReference type="SMR" id="Q5HZK9"/>
<dbReference type="AGR" id="Xenbase:XB-GENE-952551"/>
<dbReference type="Xenbase" id="XB-GENE-952551">
    <property type="gene designation" value="cep63.L"/>
</dbReference>
<dbReference type="Proteomes" id="UP000186698">
    <property type="component" value="Unplaced"/>
</dbReference>
<dbReference type="GO" id="GO:0005814">
    <property type="term" value="C:centriole"/>
    <property type="evidence" value="ECO:0000250"/>
    <property type="project" value="UniProtKB"/>
</dbReference>
<dbReference type="GO" id="GO:0005813">
    <property type="term" value="C:centrosome"/>
    <property type="evidence" value="ECO:0000250"/>
    <property type="project" value="UniProtKB"/>
</dbReference>
<dbReference type="GO" id="GO:0005737">
    <property type="term" value="C:cytoplasm"/>
    <property type="evidence" value="ECO:0007669"/>
    <property type="project" value="UniProtKB-KW"/>
</dbReference>
<dbReference type="GO" id="GO:0000922">
    <property type="term" value="C:spindle pole"/>
    <property type="evidence" value="ECO:0000250"/>
    <property type="project" value="UniProtKB"/>
</dbReference>
<dbReference type="GO" id="GO:0051301">
    <property type="term" value="P:cell division"/>
    <property type="evidence" value="ECO:0007669"/>
    <property type="project" value="UniProtKB-KW"/>
</dbReference>
<dbReference type="GO" id="GO:0007099">
    <property type="term" value="P:centriole replication"/>
    <property type="evidence" value="ECO:0000250"/>
    <property type="project" value="UniProtKB"/>
</dbReference>
<dbReference type="GO" id="GO:0098535">
    <property type="term" value="P:de novo centriole assembly involved in multi-ciliated epithelial cell differentiation"/>
    <property type="evidence" value="ECO:0000318"/>
    <property type="project" value="GO_Central"/>
</dbReference>
<dbReference type="GO" id="GO:0000077">
    <property type="term" value="P:DNA damage checkpoint signaling"/>
    <property type="evidence" value="ECO:0000250"/>
    <property type="project" value="UniProtKB"/>
</dbReference>
<dbReference type="GO" id="GO:0042770">
    <property type="term" value="P:signal transduction in response to DNA damage"/>
    <property type="evidence" value="ECO:0000250"/>
    <property type="project" value="UniProtKB"/>
</dbReference>
<dbReference type="GO" id="GO:0051225">
    <property type="term" value="P:spindle assembly"/>
    <property type="evidence" value="ECO:0000250"/>
    <property type="project" value="UniProtKB"/>
</dbReference>
<dbReference type="InterPro" id="IPR031470">
    <property type="entry name" value="Cep63/Deup1_N"/>
</dbReference>
<dbReference type="PANTHER" id="PTHR18875:SF7">
    <property type="entry name" value="CENTROSOMAL PROTEIN OF 63 KDA"/>
    <property type="match status" value="1"/>
</dbReference>
<dbReference type="PANTHER" id="PTHR18875">
    <property type="entry name" value="SARCOMA ANTIGEN NY-SAR-24/CYTOSKELETAL PROTEIN SOJO"/>
    <property type="match status" value="1"/>
</dbReference>
<dbReference type="Pfam" id="PF17045">
    <property type="entry name" value="CEP63"/>
    <property type="match status" value="1"/>
</dbReference>